<sequence length="394" mass="44761">MDSQGRKVVVCDNGTGFVKCGYAGSNFPEHIFPALVGRPIIRSTTKVGNIEIKDLMVGDEASELRSMLEVNYPMENGIVRNWDDMKHLWDYTFGPEKLNIDTRNCKILLTEPPMNPTKNREKIVEVMFETYQFSGVYVAIQAVLTLYAQGLLTGVVVDSGDGVTHICPVYEGFSLPHLTRRLDIAGRDITRYLIKLLLLRGYAFNHSADFETVRMIKEKLCYVGYNIEQEQKLALETTVLVESYTLPDGRIIKVGGERFEAPEALFQPHLINVEGVGVAELLFNTIQAADIDTRSEFYKHIVLSGGSTMYPGLPSRLERELKQLYLERVLKGDVEKLSKFKIRIEDPPRRKHMVFLGGAVLADIMKDKDNFWMTRQEYQEKGVRVLEKLGVTVR</sequence>
<proteinExistence type="evidence at protein level"/>
<accession>P61161</accession>
<accession>O15142</accession>
<accession>Q6PI31</accession>
<name>ARP2_MOUSE</name>
<dbReference type="EMBL" id="AK032832">
    <property type="protein sequence ID" value="BAC28048.1"/>
    <property type="molecule type" value="mRNA"/>
</dbReference>
<dbReference type="EMBL" id="AK088216">
    <property type="protein sequence ID" value="BAC40216.1"/>
    <property type="molecule type" value="mRNA"/>
</dbReference>
<dbReference type="EMBL" id="BC027799">
    <property type="protein sequence ID" value="AAH27799.1"/>
    <property type="molecule type" value="mRNA"/>
</dbReference>
<dbReference type="EMBL" id="BC047530">
    <property type="protein sequence ID" value="AAH47530.1"/>
    <property type="molecule type" value="mRNA"/>
</dbReference>
<dbReference type="CCDS" id="CCDS24455.1"/>
<dbReference type="RefSeq" id="NP_666355.1">
    <property type="nucleotide sequence ID" value="NM_146243.2"/>
</dbReference>
<dbReference type="PDB" id="7AQK">
    <property type="method" value="EM"/>
    <property type="resolution" value="9.00 A"/>
    <property type="chains" value="b=1-394"/>
</dbReference>
<dbReference type="PDBsum" id="7AQK"/>
<dbReference type="SMR" id="P61161"/>
<dbReference type="BioGRID" id="211665">
    <property type="interactions" value="48"/>
</dbReference>
<dbReference type="FunCoup" id="P61161">
    <property type="interactions" value="3494"/>
</dbReference>
<dbReference type="IntAct" id="P61161">
    <property type="interactions" value="6"/>
</dbReference>
<dbReference type="MINT" id="P61161"/>
<dbReference type="STRING" id="10090.ENSMUSP00000000137"/>
<dbReference type="GlyGen" id="P61161">
    <property type="glycosylation" value="3 sites, 2 N-linked glycans (2 sites), 1 O-linked glycan (1 site)"/>
</dbReference>
<dbReference type="iPTMnet" id="P61161"/>
<dbReference type="MetOSite" id="P61161"/>
<dbReference type="PhosphoSitePlus" id="P61161"/>
<dbReference type="SwissPalm" id="P61161"/>
<dbReference type="jPOST" id="P61161"/>
<dbReference type="PaxDb" id="10090-ENSMUSP00000000137"/>
<dbReference type="PeptideAtlas" id="P61161"/>
<dbReference type="ProteomicsDB" id="283243"/>
<dbReference type="Pumba" id="P61161"/>
<dbReference type="Antibodypedia" id="3912">
    <property type="antibodies" value="298 antibodies from 37 providers"/>
</dbReference>
<dbReference type="DNASU" id="66713"/>
<dbReference type="Ensembl" id="ENSMUST00000000137.8">
    <property type="protein sequence ID" value="ENSMUSP00000000137.8"/>
    <property type="gene ID" value="ENSMUSG00000020152.8"/>
</dbReference>
<dbReference type="GeneID" id="66713"/>
<dbReference type="KEGG" id="mmu:66713"/>
<dbReference type="UCSC" id="uc011xrw.1">
    <property type="organism name" value="mouse"/>
</dbReference>
<dbReference type="AGR" id="MGI:1913963"/>
<dbReference type="CTD" id="10097"/>
<dbReference type="MGI" id="MGI:1913963">
    <property type="gene designation" value="Actr2"/>
</dbReference>
<dbReference type="VEuPathDB" id="HostDB:ENSMUSG00000020152"/>
<dbReference type="eggNOG" id="KOG0677">
    <property type="taxonomic scope" value="Eukaryota"/>
</dbReference>
<dbReference type="GeneTree" id="ENSGT00940000154556"/>
<dbReference type="HOGENOM" id="CLU_027965_0_0_1"/>
<dbReference type="InParanoid" id="P61161"/>
<dbReference type="OMA" id="WEDMQHL"/>
<dbReference type="OrthoDB" id="10251209at2759"/>
<dbReference type="PhylomeDB" id="P61161"/>
<dbReference type="TreeFam" id="TF300467"/>
<dbReference type="Reactome" id="R-MMU-2029482">
    <property type="pathway name" value="Regulation of actin dynamics for phagocytic cup formation"/>
</dbReference>
<dbReference type="Reactome" id="R-MMU-3928662">
    <property type="pathway name" value="EPHB-mediated forward signaling"/>
</dbReference>
<dbReference type="Reactome" id="R-MMU-5663213">
    <property type="pathway name" value="RHO GTPases Activate WASPs and WAVEs"/>
</dbReference>
<dbReference type="Reactome" id="R-MMU-6798695">
    <property type="pathway name" value="Neutrophil degranulation"/>
</dbReference>
<dbReference type="Reactome" id="R-MMU-8856828">
    <property type="pathway name" value="Clathrin-mediated endocytosis"/>
</dbReference>
<dbReference type="BioGRID-ORCS" id="66713">
    <property type="hits" value="38 hits in 81 CRISPR screens"/>
</dbReference>
<dbReference type="CD-CODE" id="5E82D60E">
    <property type="entry name" value="Nucleolus"/>
</dbReference>
<dbReference type="CD-CODE" id="CE726F99">
    <property type="entry name" value="Postsynaptic density"/>
</dbReference>
<dbReference type="ChiTaRS" id="Actr2">
    <property type="organism name" value="mouse"/>
</dbReference>
<dbReference type="PRO" id="PR:P61161"/>
<dbReference type="Proteomes" id="UP000000589">
    <property type="component" value="Chromosome 11"/>
</dbReference>
<dbReference type="RNAct" id="P61161">
    <property type="molecule type" value="protein"/>
</dbReference>
<dbReference type="Bgee" id="ENSMUSG00000020152">
    <property type="expression patterns" value="Expressed in stroma of bone marrow and 257 other cell types or tissues"/>
</dbReference>
<dbReference type="ExpressionAtlas" id="P61161">
    <property type="expression patterns" value="baseline and differential"/>
</dbReference>
<dbReference type="GO" id="GO:0030478">
    <property type="term" value="C:actin cap"/>
    <property type="evidence" value="ECO:0000314"/>
    <property type="project" value="MGI"/>
</dbReference>
<dbReference type="GO" id="GO:0005885">
    <property type="term" value="C:Arp2/3 protein complex"/>
    <property type="evidence" value="ECO:0000250"/>
    <property type="project" value="UniProtKB"/>
</dbReference>
<dbReference type="GO" id="GO:0005938">
    <property type="term" value="C:cell cortex"/>
    <property type="evidence" value="ECO:0000314"/>
    <property type="project" value="MGI"/>
</dbReference>
<dbReference type="GO" id="GO:0042995">
    <property type="term" value="C:cell projection"/>
    <property type="evidence" value="ECO:0007669"/>
    <property type="project" value="UniProtKB-SubCell"/>
</dbReference>
<dbReference type="GO" id="GO:0005737">
    <property type="term" value="C:cytoplasm"/>
    <property type="evidence" value="ECO:0000250"/>
    <property type="project" value="UniProtKB"/>
</dbReference>
<dbReference type="GO" id="GO:0005829">
    <property type="term" value="C:cytosol"/>
    <property type="evidence" value="ECO:0007669"/>
    <property type="project" value="GOC"/>
</dbReference>
<dbReference type="GO" id="GO:0005634">
    <property type="term" value="C:nucleus"/>
    <property type="evidence" value="ECO:0000250"/>
    <property type="project" value="UniProtKB"/>
</dbReference>
<dbReference type="GO" id="GO:0035861">
    <property type="term" value="C:site of double-strand break"/>
    <property type="evidence" value="ECO:0000250"/>
    <property type="project" value="UniProtKB"/>
</dbReference>
<dbReference type="GO" id="GO:0051015">
    <property type="term" value="F:actin filament binding"/>
    <property type="evidence" value="ECO:0007669"/>
    <property type="project" value="Ensembl"/>
</dbReference>
<dbReference type="GO" id="GO:0005524">
    <property type="term" value="F:ATP binding"/>
    <property type="evidence" value="ECO:0007669"/>
    <property type="project" value="UniProtKB-KW"/>
</dbReference>
<dbReference type="GO" id="GO:0005200">
    <property type="term" value="F:structural constituent of cytoskeleton"/>
    <property type="evidence" value="ECO:0007669"/>
    <property type="project" value="Ensembl"/>
</dbReference>
<dbReference type="GO" id="GO:0030036">
    <property type="term" value="P:actin cytoskeleton organization"/>
    <property type="evidence" value="ECO:0000315"/>
    <property type="project" value="MGI"/>
</dbReference>
<dbReference type="GO" id="GO:0034314">
    <property type="term" value="P:Arp2/3 complex-mediated actin nucleation"/>
    <property type="evidence" value="ECO:0000250"/>
    <property type="project" value="UniProtKB"/>
</dbReference>
<dbReference type="GO" id="GO:0008356">
    <property type="term" value="P:asymmetric cell division"/>
    <property type="evidence" value="ECO:0000316"/>
    <property type="project" value="MGI"/>
</dbReference>
<dbReference type="GO" id="GO:0071346">
    <property type="term" value="P:cellular response to type II interferon"/>
    <property type="evidence" value="ECO:0000316"/>
    <property type="project" value="MGI"/>
</dbReference>
<dbReference type="GO" id="GO:0060271">
    <property type="term" value="P:cilium assembly"/>
    <property type="evidence" value="ECO:0000266"/>
    <property type="project" value="MGI"/>
</dbReference>
<dbReference type="GO" id="GO:0016482">
    <property type="term" value="P:cytosolic transport"/>
    <property type="evidence" value="ECO:0000315"/>
    <property type="project" value="MGI"/>
</dbReference>
<dbReference type="GO" id="GO:0007163">
    <property type="term" value="P:establishment or maintenance of cell polarity"/>
    <property type="evidence" value="ECO:0000316"/>
    <property type="project" value="MGI"/>
</dbReference>
<dbReference type="GO" id="GO:0051321">
    <property type="term" value="P:meiotic cell cycle"/>
    <property type="evidence" value="ECO:0000316"/>
    <property type="project" value="MGI"/>
</dbReference>
<dbReference type="GO" id="GO:0016344">
    <property type="term" value="P:meiotic chromosome movement towards spindle pole"/>
    <property type="evidence" value="ECO:0000316"/>
    <property type="project" value="MGI"/>
</dbReference>
<dbReference type="GO" id="GO:0033206">
    <property type="term" value="P:meiotic cytokinesis"/>
    <property type="evidence" value="ECO:0000316"/>
    <property type="project" value="MGI"/>
</dbReference>
<dbReference type="GO" id="GO:1905168">
    <property type="term" value="P:positive regulation of double-strand break repair via homologous recombination"/>
    <property type="evidence" value="ECO:0000250"/>
    <property type="project" value="UniProtKB"/>
</dbReference>
<dbReference type="GO" id="GO:0010592">
    <property type="term" value="P:positive regulation of lamellipodium assembly"/>
    <property type="evidence" value="ECO:0000250"/>
    <property type="project" value="UniProtKB"/>
</dbReference>
<dbReference type="GO" id="GO:0045944">
    <property type="term" value="P:positive regulation of transcription by RNA polymerase II"/>
    <property type="evidence" value="ECO:0000250"/>
    <property type="project" value="UniProtKB"/>
</dbReference>
<dbReference type="GO" id="GO:0051653">
    <property type="term" value="P:spindle localization"/>
    <property type="evidence" value="ECO:0000316"/>
    <property type="project" value="MGI"/>
</dbReference>
<dbReference type="CDD" id="cd10220">
    <property type="entry name" value="ASKHA_NBD_Arp2"/>
    <property type="match status" value="1"/>
</dbReference>
<dbReference type="FunFam" id="3.30.420.40:FF:000538">
    <property type="entry name" value="Actin-related protein 2"/>
    <property type="match status" value="1"/>
</dbReference>
<dbReference type="FunFam" id="3.90.640.10:FF:000005">
    <property type="entry name" value="Actin-related protein 2"/>
    <property type="match status" value="1"/>
</dbReference>
<dbReference type="Gene3D" id="3.30.420.40">
    <property type="match status" value="2"/>
</dbReference>
<dbReference type="Gene3D" id="3.90.640.10">
    <property type="entry name" value="Actin, Chain A, domain 4"/>
    <property type="match status" value="1"/>
</dbReference>
<dbReference type="InterPro" id="IPR004000">
    <property type="entry name" value="Actin"/>
</dbReference>
<dbReference type="InterPro" id="IPR020902">
    <property type="entry name" value="Actin/actin-like_CS"/>
</dbReference>
<dbReference type="InterPro" id="IPR043129">
    <property type="entry name" value="ATPase_NBD"/>
</dbReference>
<dbReference type="PANTHER" id="PTHR11937">
    <property type="entry name" value="ACTIN"/>
    <property type="match status" value="1"/>
</dbReference>
<dbReference type="Pfam" id="PF00022">
    <property type="entry name" value="Actin"/>
    <property type="match status" value="1"/>
</dbReference>
<dbReference type="PRINTS" id="PR00190">
    <property type="entry name" value="ACTIN"/>
</dbReference>
<dbReference type="SMART" id="SM00268">
    <property type="entry name" value="ACTIN"/>
    <property type="match status" value="1"/>
</dbReference>
<dbReference type="SUPFAM" id="SSF53067">
    <property type="entry name" value="Actin-like ATPase domain"/>
    <property type="match status" value="2"/>
</dbReference>
<dbReference type="PROSITE" id="PS01132">
    <property type="entry name" value="ACTINS_ACT_LIKE"/>
    <property type="match status" value="1"/>
</dbReference>
<evidence type="ECO:0000250" key="1">
    <source>
        <dbReference type="UniProtKB" id="A7MB62"/>
    </source>
</evidence>
<evidence type="ECO:0000250" key="2">
    <source>
        <dbReference type="UniProtKB" id="P61160"/>
    </source>
</evidence>
<evidence type="ECO:0000269" key="3">
    <source>
    </source>
</evidence>
<evidence type="ECO:0000305" key="4"/>
<reference key="1">
    <citation type="journal article" date="2005" name="Science">
        <title>The transcriptional landscape of the mammalian genome.</title>
        <authorList>
            <person name="Carninci P."/>
            <person name="Kasukawa T."/>
            <person name="Katayama S."/>
            <person name="Gough J."/>
            <person name="Frith M.C."/>
            <person name="Maeda N."/>
            <person name="Oyama R."/>
            <person name="Ravasi T."/>
            <person name="Lenhard B."/>
            <person name="Wells C."/>
            <person name="Kodzius R."/>
            <person name="Shimokawa K."/>
            <person name="Bajic V.B."/>
            <person name="Brenner S.E."/>
            <person name="Batalov S."/>
            <person name="Forrest A.R."/>
            <person name="Zavolan M."/>
            <person name="Davis M.J."/>
            <person name="Wilming L.G."/>
            <person name="Aidinis V."/>
            <person name="Allen J.E."/>
            <person name="Ambesi-Impiombato A."/>
            <person name="Apweiler R."/>
            <person name="Aturaliya R.N."/>
            <person name="Bailey T.L."/>
            <person name="Bansal M."/>
            <person name="Baxter L."/>
            <person name="Beisel K.W."/>
            <person name="Bersano T."/>
            <person name="Bono H."/>
            <person name="Chalk A.M."/>
            <person name="Chiu K.P."/>
            <person name="Choudhary V."/>
            <person name="Christoffels A."/>
            <person name="Clutterbuck D.R."/>
            <person name="Crowe M.L."/>
            <person name="Dalla E."/>
            <person name="Dalrymple B.P."/>
            <person name="de Bono B."/>
            <person name="Della Gatta G."/>
            <person name="di Bernardo D."/>
            <person name="Down T."/>
            <person name="Engstrom P."/>
            <person name="Fagiolini M."/>
            <person name="Faulkner G."/>
            <person name="Fletcher C.F."/>
            <person name="Fukushima T."/>
            <person name="Furuno M."/>
            <person name="Futaki S."/>
            <person name="Gariboldi M."/>
            <person name="Georgii-Hemming P."/>
            <person name="Gingeras T.R."/>
            <person name="Gojobori T."/>
            <person name="Green R.E."/>
            <person name="Gustincich S."/>
            <person name="Harbers M."/>
            <person name="Hayashi Y."/>
            <person name="Hensch T.K."/>
            <person name="Hirokawa N."/>
            <person name="Hill D."/>
            <person name="Huminiecki L."/>
            <person name="Iacono M."/>
            <person name="Ikeo K."/>
            <person name="Iwama A."/>
            <person name="Ishikawa T."/>
            <person name="Jakt M."/>
            <person name="Kanapin A."/>
            <person name="Katoh M."/>
            <person name="Kawasawa Y."/>
            <person name="Kelso J."/>
            <person name="Kitamura H."/>
            <person name="Kitano H."/>
            <person name="Kollias G."/>
            <person name="Krishnan S.P."/>
            <person name="Kruger A."/>
            <person name="Kummerfeld S.K."/>
            <person name="Kurochkin I.V."/>
            <person name="Lareau L.F."/>
            <person name="Lazarevic D."/>
            <person name="Lipovich L."/>
            <person name="Liu J."/>
            <person name="Liuni S."/>
            <person name="McWilliam S."/>
            <person name="Madan Babu M."/>
            <person name="Madera M."/>
            <person name="Marchionni L."/>
            <person name="Matsuda H."/>
            <person name="Matsuzawa S."/>
            <person name="Miki H."/>
            <person name="Mignone F."/>
            <person name="Miyake S."/>
            <person name="Morris K."/>
            <person name="Mottagui-Tabar S."/>
            <person name="Mulder N."/>
            <person name="Nakano N."/>
            <person name="Nakauchi H."/>
            <person name="Ng P."/>
            <person name="Nilsson R."/>
            <person name="Nishiguchi S."/>
            <person name="Nishikawa S."/>
            <person name="Nori F."/>
            <person name="Ohara O."/>
            <person name="Okazaki Y."/>
            <person name="Orlando V."/>
            <person name="Pang K.C."/>
            <person name="Pavan W.J."/>
            <person name="Pavesi G."/>
            <person name="Pesole G."/>
            <person name="Petrovsky N."/>
            <person name="Piazza S."/>
            <person name="Reed J."/>
            <person name="Reid J.F."/>
            <person name="Ring B.Z."/>
            <person name="Ringwald M."/>
            <person name="Rost B."/>
            <person name="Ruan Y."/>
            <person name="Salzberg S.L."/>
            <person name="Sandelin A."/>
            <person name="Schneider C."/>
            <person name="Schoenbach C."/>
            <person name="Sekiguchi K."/>
            <person name="Semple C.A."/>
            <person name="Seno S."/>
            <person name="Sessa L."/>
            <person name="Sheng Y."/>
            <person name="Shibata Y."/>
            <person name="Shimada H."/>
            <person name="Shimada K."/>
            <person name="Silva D."/>
            <person name="Sinclair B."/>
            <person name="Sperling S."/>
            <person name="Stupka E."/>
            <person name="Sugiura K."/>
            <person name="Sultana R."/>
            <person name="Takenaka Y."/>
            <person name="Taki K."/>
            <person name="Tammoja K."/>
            <person name="Tan S.L."/>
            <person name="Tang S."/>
            <person name="Taylor M.S."/>
            <person name="Tegner J."/>
            <person name="Teichmann S.A."/>
            <person name="Ueda H.R."/>
            <person name="van Nimwegen E."/>
            <person name="Verardo R."/>
            <person name="Wei C.L."/>
            <person name="Yagi K."/>
            <person name="Yamanishi H."/>
            <person name="Zabarovsky E."/>
            <person name="Zhu S."/>
            <person name="Zimmer A."/>
            <person name="Hide W."/>
            <person name="Bult C."/>
            <person name="Grimmond S.M."/>
            <person name="Teasdale R.D."/>
            <person name="Liu E.T."/>
            <person name="Brusic V."/>
            <person name="Quackenbush J."/>
            <person name="Wahlestedt C."/>
            <person name="Mattick J.S."/>
            <person name="Hume D.A."/>
            <person name="Kai C."/>
            <person name="Sasaki D."/>
            <person name="Tomaru Y."/>
            <person name="Fukuda S."/>
            <person name="Kanamori-Katayama M."/>
            <person name="Suzuki M."/>
            <person name="Aoki J."/>
            <person name="Arakawa T."/>
            <person name="Iida J."/>
            <person name="Imamura K."/>
            <person name="Itoh M."/>
            <person name="Kato T."/>
            <person name="Kawaji H."/>
            <person name="Kawagashira N."/>
            <person name="Kawashima T."/>
            <person name="Kojima M."/>
            <person name="Kondo S."/>
            <person name="Konno H."/>
            <person name="Nakano K."/>
            <person name="Ninomiya N."/>
            <person name="Nishio T."/>
            <person name="Okada M."/>
            <person name="Plessy C."/>
            <person name="Shibata K."/>
            <person name="Shiraki T."/>
            <person name="Suzuki S."/>
            <person name="Tagami M."/>
            <person name="Waki K."/>
            <person name="Watahiki A."/>
            <person name="Okamura-Oho Y."/>
            <person name="Suzuki H."/>
            <person name="Kawai J."/>
            <person name="Hayashizaki Y."/>
        </authorList>
    </citation>
    <scope>NUCLEOTIDE SEQUENCE [LARGE SCALE MRNA]</scope>
    <source>
        <strain>C57BL/6J</strain>
        <strain>NOD</strain>
        <tissue>Thymus</tissue>
    </source>
</reference>
<reference key="2">
    <citation type="journal article" date="2004" name="Genome Res.">
        <title>The status, quality, and expansion of the NIH full-length cDNA project: the Mammalian Gene Collection (MGC).</title>
        <authorList>
            <consortium name="The MGC Project Team"/>
        </authorList>
    </citation>
    <scope>NUCLEOTIDE SEQUENCE [LARGE SCALE MRNA]</scope>
    <source>
        <strain>FVB/N</strain>
        <tissue>Mammary gland</tissue>
    </source>
</reference>
<reference key="3">
    <citation type="submission" date="2007-04" db="UniProtKB">
        <authorList>
            <person name="Lubec G."/>
            <person name="Kang S.U."/>
        </authorList>
    </citation>
    <scope>PROTEIN SEQUENCE OF 54-65; 300-316; 323-328 AND 352-366</scope>
    <scope>IDENTIFICATION BY MASS SPECTROMETRY</scope>
    <source>
        <strain>C57BL/6J</strain>
        <tissue>Brain</tissue>
    </source>
</reference>
<reference key="4">
    <citation type="journal article" date="2010" name="Cell">
        <title>A tissue-specific atlas of mouse protein phosphorylation and expression.</title>
        <authorList>
            <person name="Huttlin E.L."/>
            <person name="Jedrychowski M.P."/>
            <person name="Elias J.E."/>
            <person name="Goswami T."/>
            <person name="Rad R."/>
            <person name="Beausoleil S.A."/>
            <person name="Villen J."/>
            <person name="Haas W."/>
            <person name="Sowa M.E."/>
            <person name="Gygi S.P."/>
        </authorList>
    </citation>
    <scope>IDENTIFICATION BY MASS SPECTROMETRY [LARGE SCALE ANALYSIS]</scope>
    <source>
        <tissue>Brain</tissue>
        <tissue>Brown adipose tissue</tissue>
        <tissue>Heart</tissue>
        <tissue>Kidney</tissue>
        <tissue>Liver</tissue>
        <tissue>Lung</tissue>
        <tissue>Pancreas</tissue>
        <tissue>Spleen</tissue>
        <tissue>Testis</tissue>
    </source>
</reference>
<reference key="5">
    <citation type="journal article" date="2010" name="J. Bacteriol.">
        <title>Actin-based motility of Burkholderia thailandensis requires a central acidic domain of BimA that recruits and activates the cellular Arp2/3 complex.</title>
        <authorList>
            <person name="Sitthidet C."/>
            <person name="Stevens J.M."/>
            <person name="Field T.R."/>
            <person name="Layton A.N."/>
            <person name="Korbsrisate S."/>
            <person name="Stevens M.P."/>
        </authorList>
    </citation>
    <scope>INTERACTION WITH B.THAILANDENSIS BIMA (MICROBIAL INFECTION)</scope>
</reference>
<gene>
    <name type="primary">Actr2</name>
    <name type="synonym">Arp2</name>
</gene>
<keyword id="KW-0002">3D-structure</keyword>
<keyword id="KW-0007">Acetylation</keyword>
<keyword id="KW-0009">Actin-binding</keyword>
<keyword id="KW-0067">ATP-binding</keyword>
<keyword id="KW-0966">Cell projection</keyword>
<keyword id="KW-0963">Cytoplasm</keyword>
<keyword id="KW-0206">Cytoskeleton</keyword>
<keyword id="KW-0903">Direct protein sequencing</keyword>
<keyword id="KW-0547">Nucleotide-binding</keyword>
<keyword id="KW-0539">Nucleus</keyword>
<keyword id="KW-1185">Reference proteome</keyword>
<feature type="chain" id="PRO_0000089068" description="Actin-related protein 2">
    <location>
        <begin position="1"/>
        <end position="394"/>
    </location>
</feature>
<feature type="binding site" evidence="1">
    <location>
        <begin position="160"/>
        <end position="162"/>
    </location>
    <ligand>
        <name>ATP</name>
        <dbReference type="ChEBI" id="CHEBI:30616"/>
    </ligand>
</feature>
<feature type="binding site" evidence="1">
    <location>
        <begin position="214"/>
        <end position="218"/>
    </location>
    <ligand>
        <name>ATP</name>
        <dbReference type="ChEBI" id="CHEBI:30616"/>
    </ligand>
</feature>
<feature type="binding site" evidence="1">
    <location>
        <begin position="305"/>
        <end position="310"/>
    </location>
    <ligand>
        <name>ATP</name>
        <dbReference type="ChEBI" id="CHEBI:30616"/>
    </ligand>
</feature>
<feature type="modified residue" description="N-acetylmethionine" evidence="2">
    <location>
        <position position="1"/>
    </location>
</feature>
<feature type="modified residue" description="N6-acetyllysine" evidence="2">
    <location>
        <position position="299"/>
    </location>
</feature>
<feature type="modified residue" description="N6-acetyllysine" evidence="2">
    <location>
        <position position="322"/>
    </location>
</feature>
<organism>
    <name type="scientific">Mus musculus</name>
    <name type="common">Mouse</name>
    <dbReference type="NCBI Taxonomy" id="10090"/>
    <lineage>
        <taxon>Eukaryota</taxon>
        <taxon>Metazoa</taxon>
        <taxon>Chordata</taxon>
        <taxon>Craniata</taxon>
        <taxon>Vertebrata</taxon>
        <taxon>Euteleostomi</taxon>
        <taxon>Mammalia</taxon>
        <taxon>Eutheria</taxon>
        <taxon>Euarchontoglires</taxon>
        <taxon>Glires</taxon>
        <taxon>Rodentia</taxon>
        <taxon>Myomorpha</taxon>
        <taxon>Muroidea</taxon>
        <taxon>Muridae</taxon>
        <taxon>Murinae</taxon>
        <taxon>Mus</taxon>
        <taxon>Mus</taxon>
    </lineage>
</organism>
<protein>
    <recommendedName>
        <fullName>Actin-related protein 2</fullName>
    </recommendedName>
    <alternativeName>
        <fullName>Actin-like protein 2</fullName>
    </alternativeName>
</protein>
<comment type="function">
    <text evidence="2">ATP-binding component of the Arp2/3 complex, a multiprotein complex that mediates actin polymerization upon stimulation by nucleation-promoting factor (NPF). The Arp2/3 complex mediates the formation of branched actin networks in the cytoplasm, providing the force for cell motility. Seems to contact the pointed end of the daughter actin filament. In podocytes, required for the formation of lamellipodia downstream of AVIL and PLCE1 regulation. In addition to its role in the cytoplasmic cytoskeleton, the Arp2/3 complex also promotes actin polymerization in the nucleus, thereby regulating gene transcription and repair of damaged DNA. The Arp2/3 complex promotes homologous recombination (HR) repair in response to DNA damage by promoting nuclear actin polymerization, leading to drive motility of double-strand breaks (DSBs).</text>
</comment>
<comment type="subunit">
    <text evidence="2">Component of the Arp2/3 complex composed of ACTR2/ARP2, ACTR3/ARP3, ARPC1B/p41-ARC, ARPC2/p34-ARC, ARPC3/p21-ARC, ARPC4/p20-ARC and ARPC5/p16-ARC. Interacts with AVIL.</text>
</comment>
<comment type="subunit">
    <text evidence="3">(Microbial infection) Interacts with bacterium B.thailandensis BimA.</text>
</comment>
<comment type="subcellular location">
    <subcellularLocation>
        <location evidence="2">Cytoplasm</location>
        <location evidence="2">Cytoskeleton</location>
    </subcellularLocation>
    <subcellularLocation>
        <location evidence="2">Cell projection</location>
    </subcellularLocation>
    <subcellularLocation>
        <location evidence="2">Nucleus</location>
    </subcellularLocation>
</comment>
<comment type="similarity">
    <text evidence="4">Belongs to the actin family. ARP2 subfamily.</text>
</comment>